<name>MDAR_PEA</name>
<feature type="chain" id="PRO_0000209143" description="Monodehydroascorbate reductase">
    <location>
        <begin position="1"/>
        <end position="433"/>
    </location>
</feature>
<feature type="binding site" evidence="1">
    <location>
        <begin position="12"/>
        <end position="15"/>
    </location>
    <ligand>
        <name>FAD</name>
        <dbReference type="ChEBI" id="CHEBI:57692"/>
    </ligand>
</feature>
<feature type="binding site" evidence="1">
    <location>
        <position position="39"/>
    </location>
    <ligand>
        <name>FAD</name>
        <dbReference type="ChEBI" id="CHEBI:57692"/>
    </ligand>
</feature>
<feature type="binding site" evidence="1">
    <location>
        <position position="46"/>
    </location>
    <ligand>
        <name>FAD</name>
        <dbReference type="ChEBI" id="CHEBI:57692"/>
    </ligand>
</feature>
<feature type="binding site" evidence="1">
    <location>
        <position position="51"/>
    </location>
    <ligand>
        <name>FAD</name>
        <dbReference type="ChEBI" id="CHEBI:57692"/>
    </ligand>
</feature>
<feature type="binding site" evidence="1">
    <location>
        <position position="94"/>
    </location>
    <ligand>
        <name>FAD</name>
        <dbReference type="ChEBI" id="CHEBI:57692"/>
    </ligand>
</feature>
<feature type="binding site" evidence="1">
    <location>
        <begin position="145"/>
        <end position="146"/>
    </location>
    <ligand>
        <name>FAD</name>
        <dbReference type="ChEBI" id="CHEBI:57692"/>
    </ligand>
</feature>
<feature type="binding site" evidence="1">
    <location>
        <begin position="170"/>
        <end position="176"/>
    </location>
    <ligand>
        <name>NAD(+)</name>
        <dbReference type="ChEBI" id="CHEBI:57540"/>
    </ligand>
</feature>
<feature type="binding site" evidence="1">
    <location>
        <begin position="172"/>
        <end position="176"/>
    </location>
    <ligand>
        <name>NADP(+)</name>
        <dbReference type="ChEBI" id="CHEBI:58349"/>
    </ligand>
</feature>
<feature type="binding site" evidence="1">
    <location>
        <position position="194"/>
    </location>
    <ligand>
        <name>NAD(+)</name>
        <dbReference type="ChEBI" id="CHEBI:57540"/>
    </ligand>
</feature>
<feature type="binding site" evidence="1">
    <location>
        <position position="200"/>
    </location>
    <ligand>
        <name>NAD(+)</name>
        <dbReference type="ChEBI" id="CHEBI:57540"/>
    </ligand>
</feature>
<feature type="binding site" evidence="1">
    <location>
        <position position="200"/>
    </location>
    <ligand>
        <name>NADP(+)</name>
        <dbReference type="ChEBI" id="CHEBI:58349"/>
    </ligand>
</feature>
<feature type="binding site" evidence="1">
    <location>
        <position position="259"/>
    </location>
    <ligand>
        <name>NAD(+)</name>
        <dbReference type="ChEBI" id="CHEBI:57540"/>
    </ligand>
</feature>
<feature type="binding site" evidence="1">
    <location>
        <position position="259"/>
    </location>
    <ligand>
        <name>NADP(+)</name>
        <dbReference type="ChEBI" id="CHEBI:58349"/>
    </ligand>
</feature>
<feature type="binding site" evidence="1">
    <location>
        <position position="296"/>
    </location>
    <ligand>
        <name>FAD</name>
        <dbReference type="ChEBI" id="CHEBI:57692"/>
    </ligand>
</feature>
<feature type="binding site" evidence="1">
    <location>
        <begin position="312"/>
        <end position="313"/>
    </location>
    <ligand>
        <name>NAD(+)</name>
        <dbReference type="ChEBI" id="CHEBI:57540"/>
    </ligand>
</feature>
<feature type="binding site" evidence="1">
    <location>
        <begin position="312"/>
        <end position="313"/>
    </location>
    <ligand>
        <name>NADP(+)</name>
        <dbReference type="ChEBI" id="CHEBI:58349"/>
    </ligand>
</feature>
<feature type="binding site" evidence="1">
    <location>
        <position position="314"/>
    </location>
    <ligand>
        <name>FAD</name>
        <dbReference type="ChEBI" id="CHEBI:57692"/>
    </ligand>
</feature>
<feature type="binding site" evidence="1">
    <location>
        <position position="318"/>
    </location>
    <ligand>
        <name>L-ascorbate</name>
        <dbReference type="ChEBI" id="CHEBI:38290"/>
    </ligand>
</feature>
<feature type="binding site" evidence="1">
    <location>
        <position position="347"/>
    </location>
    <ligand>
        <name>FAD</name>
        <dbReference type="ChEBI" id="CHEBI:57692"/>
    </ligand>
</feature>
<feature type="binding site" evidence="1">
    <location>
        <position position="347"/>
    </location>
    <ligand>
        <name>NAD(+)</name>
        <dbReference type="ChEBI" id="CHEBI:57540"/>
    </ligand>
</feature>
<feature type="binding site" evidence="1">
    <location>
        <position position="347"/>
    </location>
    <ligand>
        <name>NADP(+)</name>
        <dbReference type="ChEBI" id="CHEBI:58349"/>
    </ligand>
</feature>
<feature type="binding site" evidence="1">
    <location>
        <position position="349"/>
    </location>
    <ligand>
        <name>L-ascorbate</name>
        <dbReference type="ChEBI" id="CHEBI:38290"/>
    </ligand>
</feature>
<proteinExistence type="evidence at protein level"/>
<dbReference type="EC" id="1.6.5.4"/>
<dbReference type="EMBL" id="U06461">
    <property type="protein sequence ID" value="AAA60979.1"/>
    <property type="molecule type" value="mRNA"/>
</dbReference>
<dbReference type="PIR" id="A55333">
    <property type="entry name" value="A55333"/>
</dbReference>
<dbReference type="SMR" id="Q40977"/>
<dbReference type="GO" id="GO:0005737">
    <property type="term" value="C:cytoplasm"/>
    <property type="evidence" value="ECO:0007669"/>
    <property type="project" value="UniProtKB-SubCell"/>
</dbReference>
<dbReference type="GO" id="GO:0016656">
    <property type="term" value="F:monodehydroascorbate reductase (NADH) activity"/>
    <property type="evidence" value="ECO:0007669"/>
    <property type="project" value="UniProtKB-EC"/>
</dbReference>
<dbReference type="FunFam" id="3.30.390.30:FF:000013">
    <property type="entry name" value="Monodehydroascorbate reductase 3"/>
    <property type="match status" value="1"/>
</dbReference>
<dbReference type="FunFam" id="3.50.50.60:FF:000155">
    <property type="entry name" value="Monodehydroascorbate reductase 3"/>
    <property type="match status" value="1"/>
</dbReference>
<dbReference type="Gene3D" id="3.30.390.30">
    <property type="match status" value="1"/>
</dbReference>
<dbReference type="Gene3D" id="3.50.50.60">
    <property type="entry name" value="FAD/NAD(P)-binding domain"/>
    <property type="match status" value="2"/>
</dbReference>
<dbReference type="InterPro" id="IPR050446">
    <property type="entry name" value="FAD-oxidoreductase/Apoptosis"/>
</dbReference>
<dbReference type="InterPro" id="IPR036188">
    <property type="entry name" value="FAD/NAD-bd_sf"/>
</dbReference>
<dbReference type="InterPro" id="IPR023753">
    <property type="entry name" value="FAD/NAD-binding_dom"/>
</dbReference>
<dbReference type="InterPro" id="IPR016156">
    <property type="entry name" value="FAD/NAD-linked_Rdtase_dimer_sf"/>
</dbReference>
<dbReference type="InterPro" id="IPR048618">
    <property type="entry name" value="MDHAR3-like_C"/>
</dbReference>
<dbReference type="PANTHER" id="PTHR43557">
    <property type="entry name" value="APOPTOSIS-INDUCING FACTOR 1"/>
    <property type="match status" value="1"/>
</dbReference>
<dbReference type="PANTHER" id="PTHR43557:SF5">
    <property type="entry name" value="MONODEHYDROASCORBATE REDUCTASE 1, PEROXISOMAL"/>
    <property type="match status" value="1"/>
</dbReference>
<dbReference type="Pfam" id="PF21791">
    <property type="entry name" value="MDHAR3-like_C"/>
    <property type="match status" value="1"/>
</dbReference>
<dbReference type="Pfam" id="PF07992">
    <property type="entry name" value="Pyr_redox_2"/>
    <property type="match status" value="1"/>
</dbReference>
<dbReference type="PRINTS" id="PR00368">
    <property type="entry name" value="FADPNR"/>
</dbReference>
<dbReference type="PRINTS" id="PR00411">
    <property type="entry name" value="PNDRDTASEI"/>
</dbReference>
<dbReference type="SUPFAM" id="SSF51905">
    <property type="entry name" value="FAD/NAD(P)-binding domain"/>
    <property type="match status" value="1"/>
</dbReference>
<dbReference type="SUPFAM" id="SSF55424">
    <property type="entry name" value="FAD/NAD-linked reductases, dimerisation (C-terminal) domain"/>
    <property type="match status" value="1"/>
</dbReference>
<sequence length="433" mass="47309">MVHSFKYIIIGGGVSAGYAAREFVKQGVHPGELAIISKEAVAPYERPALSKAYLFPESPARLPGFHTCVGSGGERLLPEWYSEKGIQLYLSTEIVSADLAAKFLKSANGEHFDYQTLVIATGSAVIRLTDFGVIGANAKNIFYLREVDDADKLYEAIKRKKNAKRVVVGGGYIGLELSAVLKLNDLDVTMVYPEPWCMPRLFTSEIAAFYEGYYANKGINIIKGTVAVGFTANSDGEVKEVKLKDGRVLEADIVIVGVGGRPQISLFKGQVEEQHGGIKTDSFFKTSVPDVYAVGDVATFPLKLYNDVRRVEHVDHARKSAEQAAKAIFAADVGKSVEEYDYLPYFYSRSFDLSWQFYGDNVGETVLFGDNDPASSKPKFGTYWIKEGKVVGAFLEGGTPDENKAIAKVARAKPAVEDVNQLAEEGLSFASKI</sequence>
<evidence type="ECO:0000250" key="1">
    <source>
        <dbReference type="UniProtKB" id="Q652L6"/>
    </source>
</evidence>
<evidence type="ECO:0000250" key="2">
    <source>
        <dbReference type="UniProtKB" id="Q9S926"/>
    </source>
</evidence>
<evidence type="ECO:0000255" key="3">
    <source>
        <dbReference type="RuleBase" id="RU000401"/>
    </source>
</evidence>
<evidence type="ECO:0000269" key="4">
    <source>
    </source>
</evidence>
<evidence type="ECO:0000305" key="5"/>
<evidence type="ECO:0000312" key="6">
    <source>
        <dbReference type="EMBL" id="AAA60979.1"/>
    </source>
</evidence>
<keyword id="KW-0963">Cytoplasm</keyword>
<keyword id="KW-0274">FAD</keyword>
<keyword id="KW-0285">Flavoprotein</keyword>
<keyword id="KW-0520">NAD</keyword>
<keyword id="KW-0521">NADP</keyword>
<keyword id="KW-0560">Oxidoreductase</keyword>
<keyword id="KW-0676">Redox-active center</keyword>
<protein>
    <recommendedName>
        <fullName>Monodehydroascorbate reductase</fullName>
        <shortName>MDAR</shortName>
        <ecNumber>1.6.5.4</ecNumber>
    </recommendedName>
    <alternativeName>
        <fullName>Ascorbate free radical reductase</fullName>
        <shortName>AFR reductase</shortName>
    </alternativeName>
</protein>
<comment type="function">
    <text>Catalyzes the conversion of monodehydroascorbate to ascorbate, oxidizing NADH in the process.</text>
</comment>
<comment type="catalytic activity">
    <reaction evidence="4">
        <text>2 monodehydro-L-ascorbate radical + NADH + H(+) = 2 L-ascorbate + NAD(+)</text>
        <dbReference type="Rhea" id="RHEA:14581"/>
        <dbReference type="ChEBI" id="CHEBI:15378"/>
        <dbReference type="ChEBI" id="CHEBI:38290"/>
        <dbReference type="ChEBI" id="CHEBI:57540"/>
        <dbReference type="ChEBI" id="CHEBI:57945"/>
        <dbReference type="ChEBI" id="CHEBI:59513"/>
        <dbReference type="EC" id="1.6.5.4"/>
    </reaction>
</comment>
<comment type="cofactor">
    <cofactor evidence="2 3">
        <name>FAD</name>
        <dbReference type="ChEBI" id="CHEBI:57692"/>
    </cofactor>
</comment>
<comment type="biophysicochemical properties">
    <kinetics>
        <KM>5.3 uM for NADH</KM>
        <KM>21.5 uM for NADPH</KM>
        <KM>5.7 uM for monodehydroascorbate</KM>
        <Vmax>312.0 umol/min/mg enzyme for NADH oxidation reaction</Vmax>
        <Vmax>40.9 umol/min/mg enzyme for NADPH oxidation reaction</Vmax>
    </kinetics>
    <phDependence>
        <text>Optimum pH is 7.5-9.5.</text>
    </phDependence>
</comment>
<comment type="subcellular location">
    <subcellularLocation>
        <location evidence="5">Cytoplasm</location>
    </subcellularLocation>
</comment>
<comment type="tissue specificity">
    <text evidence="4">Expressed at relatively low levels in all tissues examined.</text>
</comment>
<comment type="similarity">
    <text evidence="5">Belongs to the FAD-dependent oxidoreductase family.</text>
</comment>
<organism evidence="6">
    <name type="scientific">Pisum sativum</name>
    <name type="common">Garden pea</name>
    <name type="synonym">Lathyrus oleraceus</name>
    <dbReference type="NCBI Taxonomy" id="3888"/>
    <lineage>
        <taxon>Eukaryota</taxon>
        <taxon>Viridiplantae</taxon>
        <taxon>Streptophyta</taxon>
        <taxon>Embryophyta</taxon>
        <taxon>Tracheophyta</taxon>
        <taxon>Spermatophyta</taxon>
        <taxon>Magnoliopsida</taxon>
        <taxon>eudicotyledons</taxon>
        <taxon>Gunneridae</taxon>
        <taxon>Pentapetalae</taxon>
        <taxon>rosids</taxon>
        <taxon>fabids</taxon>
        <taxon>Fabales</taxon>
        <taxon>Fabaceae</taxon>
        <taxon>Papilionoideae</taxon>
        <taxon>50 kb inversion clade</taxon>
        <taxon>NPAAA clade</taxon>
        <taxon>Hologalegina</taxon>
        <taxon>IRL clade</taxon>
        <taxon>Fabeae</taxon>
        <taxon>Pisum</taxon>
    </lineage>
</organism>
<accession>Q40977</accession>
<reference evidence="5" key="1">
    <citation type="journal article" date="1994" name="J. Biol. Chem.">
        <title>Molecular cloning and characterization of a cDNA encoding pea monodehydroascorbate reductase.</title>
        <authorList>
            <person name="Murthy S.S."/>
            <person name="Zilinskas B.A."/>
        </authorList>
    </citation>
    <scope>NUCLEOTIDE SEQUENCE [MRNA]</scope>
    <scope>CATALYTIC ACTIVITY</scope>
    <scope>TISSUE SPECIFICITY</scope>
    <source>
        <tissue evidence="4">Leaf</tissue>
    </source>
</reference>